<dbReference type="EC" id="6.3.4.5" evidence="1"/>
<dbReference type="EMBL" id="AP009256">
    <property type="protein sequence ID" value="BAF39700.1"/>
    <property type="molecule type" value="Genomic_DNA"/>
</dbReference>
<dbReference type="SMR" id="A1A1W7"/>
<dbReference type="STRING" id="367928.BAD_0919"/>
<dbReference type="PaxDb" id="1680-BADO_0984"/>
<dbReference type="KEGG" id="bad:BAD_0919"/>
<dbReference type="HOGENOM" id="CLU_032784_4_2_11"/>
<dbReference type="UniPathway" id="UPA00068">
    <property type="reaction ID" value="UER00113"/>
</dbReference>
<dbReference type="Proteomes" id="UP000008702">
    <property type="component" value="Chromosome"/>
</dbReference>
<dbReference type="GO" id="GO:0005737">
    <property type="term" value="C:cytoplasm"/>
    <property type="evidence" value="ECO:0007669"/>
    <property type="project" value="UniProtKB-SubCell"/>
</dbReference>
<dbReference type="GO" id="GO:0004055">
    <property type="term" value="F:argininosuccinate synthase activity"/>
    <property type="evidence" value="ECO:0007669"/>
    <property type="project" value="UniProtKB-UniRule"/>
</dbReference>
<dbReference type="GO" id="GO:0005524">
    <property type="term" value="F:ATP binding"/>
    <property type="evidence" value="ECO:0007669"/>
    <property type="project" value="UniProtKB-UniRule"/>
</dbReference>
<dbReference type="GO" id="GO:0000053">
    <property type="term" value="P:argininosuccinate metabolic process"/>
    <property type="evidence" value="ECO:0007669"/>
    <property type="project" value="TreeGrafter"/>
</dbReference>
<dbReference type="GO" id="GO:0006526">
    <property type="term" value="P:L-arginine biosynthetic process"/>
    <property type="evidence" value="ECO:0007669"/>
    <property type="project" value="UniProtKB-UniRule"/>
</dbReference>
<dbReference type="GO" id="GO:0000050">
    <property type="term" value="P:urea cycle"/>
    <property type="evidence" value="ECO:0007669"/>
    <property type="project" value="TreeGrafter"/>
</dbReference>
<dbReference type="CDD" id="cd01999">
    <property type="entry name" value="ASS"/>
    <property type="match status" value="1"/>
</dbReference>
<dbReference type="FunFam" id="3.40.50.620:FF:000038">
    <property type="entry name" value="Argininosuccinate synthase"/>
    <property type="match status" value="1"/>
</dbReference>
<dbReference type="FunFam" id="3.90.1260.10:FF:000007">
    <property type="entry name" value="Argininosuccinate synthase"/>
    <property type="match status" value="1"/>
</dbReference>
<dbReference type="Gene3D" id="3.90.1260.10">
    <property type="entry name" value="Argininosuccinate synthetase, chain A, domain 2"/>
    <property type="match status" value="1"/>
</dbReference>
<dbReference type="Gene3D" id="3.40.50.620">
    <property type="entry name" value="HUPs"/>
    <property type="match status" value="1"/>
</dbReference>
<dbReference type="Gene3D" id="1.20.5.470">
    <property type="entry name" value="Single helix bin"/>
    <property type="match status" value="1"/>
</dbReference>
<dbReference type="HAMAP" id="MF_00005">
    <property type="entry name" value="Arg_succ_synth_type1"/>
    <property type="match status" value="1"/>
</dbReference>
<dbReference type="InterPro" id="IPR048268">
    <property type="entry name" value="Arginosuc_syn_C"/>
</dbReference>
<dbReference type="InterPro" id="IPR048267">
    <property type="entry name" value="Arginosuc_syn_N"/>
</dbReference>
<dbReference type="InterPro" id="IPR001518">
    <property type="entry name" value="Arginosuc_synth"/>
</dbReference>
<dbReference type="InterPro" id="IPR018223">
    <property type="entry name" value="Arginosuc_synth_CS"/>
</dbReference>
<dbReference type="InterPro" id="IPR023434">
    <property type="entry name" value="Arginosuc_synth_type_1_subfam"/>
</dbReference>
<dbReference type="InterPro" id="IPR024074">
    <property type="entry name" value="AS_cat/multimer_dom_body"/>
</dbReference>
<dbReference type="InterPro" id="IPR014729">
    <property type="entry name" value="Rossmann-like_a/b/a_fold"/>
</dbReference>
<dbReference type="NCBIfam" id="TIGR00032">
    <property type="entry name" value="argG"/>
    <property type="match status" value="1"/>
</dbReference>
<dbReference type="NCBIfam" id="NF001770">
    <property type="entry name" value="PRK00509.1"/>
    <property type="match status" value="1"/>
</dbReference>
<dbReference type="PANTHER" id="PTHR11587">
    <property type="entry name" value="ARGININOSUCCINATE SYNTHASE"/>
    <property type="match status" value="1"/>
</dbReference>
<dbReference type="PANTHER" id="PTHR11587:SF2">
    <property type="entry name" value="ARGININOSUCCINATE SYNTHASE"/>
    <property type="match status" value="1"/>
</dbReference>
<dbReference type="Pfam" id="PF20979">
    <property type="entry name" value="Arginosuc_syn_C"/>
    <property type="match status" value="1"/>
</dbReference>
<dbReference type="Pfam" id="PF00764">
    <property type="entry name" value="Arginosuc_synth"/>
    <property type="match status" value="1"/>
</dbReference>
<dbReference type="SUPFAM" id="SSF52402">
    <property type="entry name" value="Adenine nucleotide alpha hydrolases-like"/>
    <property type="match status" value="1"/>
</dbReference>
<dbReference type="SUPFAM" id="SSF69864">
    <property type="entry name" value="Argininosuccinate synthetase, C-terminal domain"/>
    <property type="match status" value="1"/>
</dbReference>
<dbReference type="PROSITE" id="PS00564">
    <property type="entry name" value="ARGININOSUCCIN_SYN_1"/>
    <property type="match status" value="1"/>
</dbReference>
<dbReference type="PROSITE" id="PS00565">
    <property type="entry name" value="ARGININOSUCCIN_SYN_2"/>
    <property type="match status" value="1"/>
</dbReference>
<gene>
    <name evidence="1" type="primary">argG</name>
    <name type="ordered locus">BAD_0919</name>
</gene>
<protein>
    <recommendedName>
        <fullName evidence="1">Argininosuccinate synthase</fullName>
        <ecNumber evidence="1">6.3.4.5</ecNumber>
    </recommendedName>
    <alternativeName>
        <fullName evidence="1">Citrulline--aspartate ligase</fullName>
    </alternativeName>
</protein>
<organism>
    <name type="scientific">Bifidobacterium adolescentis (strain ATCC 15703 / DSM 20083 / NCTC 11814 / E194a)</name>
    <dbReference type="NCBI Taxonomy" id="367928"/>
    <lineage>
        <taxon>Bacteria</taxon>
        <taxon>Bacillati</taxon>
        <taxon>Actinomycetota</taxon>
        <taxon>Actinomycetes</taxon>
        <taxon>Bifidobacteriales</taxon>
        <taxon>Bifidobacteriaceae</taxon>
        <taxon>Bifidobacterium</taxon>
    </lineage>
</organism>
<reference key="1">
    <citation type="submission" date="2006-12" db="EMBL/GenBank/DDBJ databases">
        <title>Bifidobacterium adolescentis complete genome sequence.</title>
        <authorList>
            <person name="Suzuki T."/>
            <person name="Tsuda Y."/>
            <person name="Kanou N."/>
            <person name="Inoue T."/>
            <person name="Kumazaki K."/>
            <person name="Nagano S."/>
            <person name="Hirai S."/>
            <person name="Tanaka K."/>
            <person name="Watanabe K."/>
        </authorList>
    </citation>
    <scope>NUCLEOTIDE SEQUENCE [LARGE SCALE GENOMIC DNA]</scope>
    <source>
        <strain>ATCC 15703 / DSM 20083 / NCTC 11814 / E194a</strain>
    </source>
</reference>
<name>ASSY_BIFAA</name>
<sequence length="418" mass="46215">MLERETMSDQNRLVLAYSGGLDTSVAISYLKERTGKDVVAVSLDVGQGGESLETIKQRALACGAVEAYVVDARDEFANEYCMKALKANAMYEGVYPLVSAISRPLISKHLVRAAHQFGADTISHGCTGKGNDQVRFEVSIASIDPTLKAISPIRDLSLTRDVEIAFAKEHKLPIVQTEKSPFSIDQNVWGRAIETGFLEDPWNGPTKDCYSYTDDPAFPPVEDEVVIEFKQGVPVKIDGHDVTPLQAIEEMNRRAGAQGIGRIDLIEDRLVGIKSRELYEAPGAVALITAHQELENCCLEREQHRIKRDIDKRWAELVYDAQWFSPATQSLNAFIEDTQKYVSGEIRMVLHGGRAVVTGRRSDSSLYDYNLATYDSGDSFDQKSSNGFIDIYGLPSRVAAARDVKFGNGIEVPENSVE</sequence>
<proteinExistence type="inferred from homology"/>
<feature type="chain" id="PRO_0000321303" description="Argininosuccinate synthase">
    <location>
        <begin position="1"/>
        <end position="418"/>
    </location>
</feature>
<feature type="binding site" evidence="1">
    <location>
        <begin position="16"/>
        <end position="24"/>
    </location>
    <ligand>
        <name>ATP</name>
        <dbReference type="ChEBI" id="CHEBI:30616"/>
    </ligand>
</feature>
<feature type="binding site" evidence="1">
    <location>
        <position position="95"/>
    </location>
    <ligand>
        <name>L-citrulline</name>
        <dbReference type="ChEBI" id="CHEBI:57743"/>
    </ligand>
</feature>
<feature type="binding site" evidence="1">
    <location>
        <position position="125"/>
    </location>
    <ligand>
        <name>ATP</name>
        <dbReference type="ChEBI" id="CHEBI:30616"/>
    </ligand>
</feature>
<feature type="binding site" evidence="1">
    <location>
        <position position="127"/>
    </location>
    <ligand>
        <name>L-aspartate</name>
        <dbReference type="ChEBI" id="CHEBI:29991"/>
    </ligand>
</feature>
<feature type="binding site" evidence="1">
    <location>
        <position position="131"/>
    </location>
    <ligand>
        <name>L-aspartate</name>
        <dbReference type="ChEBI" id="CHEBI:29991"/>
    </ligand>
</feature>
<feature type="binding site" evidence="1">
    <location>
        <position position="131"/>
    </location>
    <ligand>
        <name>L-citrulline</name>
        <dbReference type="ChEBI" id="CHEBI:57743"/>
    </ligand>
</feature>
<feature type="binding site" evidence="1">
    <location>
        <position position="132"/>
    </location>
    <ligand>
        <name>L-aspartate</name>
        <dbReference type="ChEBI" id="CHEBI:29991"/>
    </ligand>
</feature>
<feature type="binding site" evidence="1">
    <location>
        <position position="135"/>
    </location>
    <ligand>
        <name>L-citrulline</name>
        <dbReference type="ChEBI" id="CHEBI:57743"/>
    </ligand>
</feature>
<feature type="binding site" evidence="1">
    <location>
        <position position="183"/>
    </location>
    <ligand>
        <name>L-citrulline</name>
        <dbReference type="ChEBI" id="CHEBI:57743"/>
    </ligand>
</feature>
<feature type="binding site" evidence="1">
    <location>
        <position position="267"/>
    </location>
    <ligand>
        <name>L-citrulline</name>
        <dbReference type="ChEBI" id="CHEBI:57743"/>
    </ligand>
</feature>
<feature type="binding site" evidence="1">
    <location>
        <position position="279"/>
    </location>
    <ligand>
        <name>L-citrulline</name>
        <dbReference type="ChEBI" id="CHEBI:57743"/>
    </ligand>
</feature>
<comment type="catalytic activity">
    <reaction evidence="1">
        <text>L-citrulline + L-aspartate + ATP = 2-(N(omega)-L-arginino)succinate + AMP + diphosphate + H(+)</text>
        <dbReference type="Rhea" id="RHEA:10932"/>
        <dbReference type="ChEBI" id="CHEBI:15378"/>
        <dbReference type="ChEBI" id="CHEBI:29991"/>
        <dbReference type="ChEBI" id="CHEBI:30616"/>
        <dbReference type="ChEBI" id="CHEBI:33019"/>
        <dbReference type="ChEBI" id="CHEBI:57472"/>
        <dbReference type="ChEBI" id="CHEBI:57743"/>
        <dbReference type="ChEBI" id="CHEBI:456215"/>
        <dbReference type="EC" id="6.3.4.5"/>
    </reaction>
</comment>
<comment type="pathway">
    <text evidence="1">Amino-acid biosynthesis; L-arginine biosynthesis; L-arginine from L-ornithine and carbamoyl phosphate: step 2/3.</text>
</comment>
<comment type="subunit">
    <text evidence="1">Homotetramer.</text>
</comment>
<comment type="subcellular location">
    <subcellularLocation>
        <location evidence="1">Cytoplasm</location>
    </subcellularLocation>
</comment>
<comment type="similarity">
    <text evidence="1">Belongs to the argininosuccinate synthase family. Type 1 subfamily.</text>
</comment>
<keyword id="KW-0028">Amino-acid biosynthesis</keyword>
<keyword id="KW-0055">Arginine biosynthesis</keyword>
<keyword id="KW-0067">ATP-binding</keyword>
<keyword id="KW-0963">Cytoplasm</keyword>
<keyword id="KW-0436">Ligase</keyword>
<keyword id="KW-0547">Nucleotide-binding</keyword>
<keyword id="KW-1185">Reference proteome</keyword>
<accession>A1A1W7</accession>
<evidence type="ECO:0000255" key="1">
    <source>
        <dbReference type="HAMAP-Rule" id="MF_00005"/>
    </source>
</evidence>